<feature type="transit peptide" description="Mitochondrion" evidence="2">
    <location>
        <begin position="1"/>
        <end position="24"/>
    </location>
</feature>
<feature type="chain" id="PRO_0000437260" description="Inner membrane assembly complex subunit 17" evidence="2">
    <location>
        <begin position="25"/>
        <end position="112"/>
    </location>
</feature>
<feature type="topological domain" description="Mitochondrial matrix" evidence="3">
    <location>
        <begin position="25"/>
        <end position="44"/>
    </location>
</feature>
<feature type="transmembrane region" description="Helical" evidence="2">
    <location>
        <begin position="45"/>
        <end position="62"/>
    </location>
</feature>
<feature type="topological domain" description="Mitochondrial intermembrane" evidence="3">
    <location>
        <begin position="63"/>
        <end position="112"/>
    </location>
</feature>
<reference key="1">
    <citation type="journal article" date="2002" name="Nature">
        <title>The genome sequence of Schizosaccharomyces pombe.</title>
        <authorList>
            <person name="Wood V."/>
            <person name="Gwilliam R."/>
            <person name="Rajandream M.A."/>
            <person name="Lyne M.H."/>
            <person name="Lyne R."/>
            <person name="Stewart A."/>
            <person name="Sgouros J.G."/>
            <person name="Peat N."/>
            <person name="Hayles J."/>
            <person name="Baker S.G."/>
            <person name="Basham D."/>
            <person name="Bowman S."/>
            <person name="Brooks K."/>
            <person name="Brown D."/>
            <person name="Brown S."/>
            <person name="Chillingworth T."/>
            <person name="Churcher C.M."/>
            <person name="Collins M."/>
            <person name="Connor R."/>
            <person name="Cronin A."/>
            <person name="Davis P."/>
            <person name="Feltwell T."/>
            <person name="Fraser A."/>
            <person name="Gentles S."/>
            <person name="Goble A."/>
            <person name="Hamlin N."/>
            <person name="Harris D.E."/>
            <person name="Hidalgo J."/>
            <person name="Hodgson G."/>
            <person name="Holroyd S."/>
            <person name="Hornsby T."/>
            <person name="Howarth S."/>
            <person name="Huckle E.J."/>
            <person name="Hunt S."/>
            <person name="Jagels K."/>
            <person name="James K.D."/>
            <person name="Jones L."/>
            <person name="Jones M."/>
            <person name="Leather S."/>
            <person name="McDonald S."/>
            <person name="McLean J."/>
            <person name="Mooney P."/>
            <person name="Moule S."/>
            <person name="Mungall K.L."/>
            <person name="Murphy L.D."/>
            <person name="Niblett D."/>
            <person name="Odell C."/>
            <person name="Oliver K."/>
            <person name="O'Neil S."/>
            <person name="Pearson D."/>
            <person name="Quail M.A."/>
            <person name="Rabbinowitsch E."/>
            <person name="Rutherford K.M."/>
            <person name="Rutter S."/>
            <person name="Saunders D."/>
            <person name="Seeger K."/>
            <person name="Sharp S."/>
            <person name="Skelton J."/>
            <person name="Simmonds M.N."/>
            <person name="Squares R."/>
            <person name="Squares S."/>
            <person name="Stevens K."/>
            <person name="Taylor K."/>
            <person name="Taylor R.G."/>
            <person name="Tivey A."/>
            <person name="Walsh S.V."/>
            <person name="Warren T."/>
            <person name="Whitehead S."/>
            <person name="Woodward J.R."/>
            <person name="Volckaert G."/>
            <person name="Aert R."/>
            <person name="Robben J."/>
            <person name="Grymonprez B."/>
            <person name="Weltjens I."/>
            <person name="Vanstreels E."/>
            <person name="Rieger M."/>
            <person name="Schaefer M."/>
            <person name="Mueller-Auer S."/>
            <person name="Gabel C."/>
            <person name="Fuchs M."/>
            <person name="Duesterhoeft A."/>
            <person name="Fritzc C."/>
            <person name="Holzer E."/>
            <person name="Moestl D."/>
            <person name="Hilbert H."/>
            <person name="Borzym K."/>
            <person name="Langer I."/>
            <person name="Beck A."/>
            <person name="Lehrach H."/>
            <person name="Reinhardt R."/>
            <person name="Pohl T.M."/>
            <person name="Eger P."/>
            <person name="Zimmermann W."/>
            <person name="Wedler H."/>
            <person name="Wambutt R."/>
            <person name="Purnelle B."/>
            <person name="Goffeau A."/>
            <person name="Cadieu E."/>
            <person name="Dreano S."/>
            <person name="Gloux S."/>
            <person name="Lelaure V."/>
            <person name="Mottier S."/>
            <person name="Galibert F."/>
            <person name="Aves S.J."/>
            <person name="Xiang Z."/>
            <person name="Hunt C."/>
            <person name="Moore K."/>
            <person name="Hurst S.M."/>
            <person name="Lucas M."/>
            <person name="Rochet M."/>
            <person name="Gaillardin C."/>
            <person name="Tallada V.A."/>
            <person name="Garzon A."/>
            <person name="Thode G."/>
            <person name="Daga R.R."/>
            <person name="Cruzado L."/>
            <person name="Jimenez J."/>
            <person name="Sanchez M."/>
            <person name="del Rey F."/>
            <person name="Benito J."/>
            <person name="Dominguez A."/>
            <person name="Revuelta J.L."/>
            <person name="Moreno S."/>
            <person name="Armstrong J."/>
            <person name="Forsburg S.L."/>
            <person name="Cerutti L."/>
            <person name="Lowe T."/>
            <person name="McCombie W.R."/>
            <person name="Paulsen I."/>
            <person name="Potashkin J."/>
            <person name="Shpakovski G.V."/>
            <person name="Ussery D."/>
            <person name="Barrell B.G."/>
            <person name="Nurse P."/>
        </authorList>
    </citation>
    <scope>NUCLEOTIDE SEQUENCE [LARGE SCALE GENOMIC DNA]</scope>
    <source>
        <strain>972 / ATCC 24843</strain>
    </source>
</reference>
<reference key="2">
    <citation type="journal article" date="2015" name="DNA Res.">
        <title>AnABlast: a new in silico strategy for the genome-wide search of novel genes and fossil regions.</title>
        <authorList>
            <person name="Jimenez J."/>
            <person name="Duncan C.D."/>
            <person name="Gallardo M."/>
            <person name="Mata J."/>
            <person name="Perez-Pulido A.J."/>
        </authorList>
    </citation>
    <scope>IDENTIFICATION</scope>
</reference>
<proteinExistence type="inferred from homology"/>
<evidence type="ECO:0000250" key="1">
    <source>
        <dbReference type="UniProtKB" id="Q02888"/>
    </source>
</evidence>
<evidence type="ECO:0000255" key="2"/>
<evidence type="ECO:0000305" key="3"/>
<evidence type="ECO:0000312" key="4">
    <source>
        <dbReference type="PomBase" id="SPBC3B8.10"/>
    </source>
</evidence>
<dbReference type="EMBL" id="CU329671">
    <property type="status" value="NOT_ANNOTATED_CDS"/>
    <property type="molecule type" value="Genomic_DNA"/>
</dbReference>
<dbReference type="SMR" id="P0CU26"/>
<dbReference type="STRING" id="284812.P0CU26"/>
<dbReference type="PomBase" id="SPBC3B8.10">
    <property type="gene designation" value="ina17"/>
</dbReference>
<dbReference type="VEuPathDB" id="FungiDB:SPBC3B8.10"/>
<dbReference type="InParanoid" id="P0CU26"/>
<dbReference type="PRO" id="PR:P0CU26"/>
<dbReference type="Proteomes" id="UP000002485">
    <property type="component" value="Chromosome II"/>
</dbReference>
<dbReference type="GO" id="GO:1990524">
    <property type="term" value="C:INA complex"/>
    <property type="evidence" value="ECO:0000266"/>
    <property type="project" value="PomBase"/>
</dbReference>
<dbReference type="GO" id="GO:0033615">
    <property type="term" value="P:mitochondrial proton-transporting ATP synthase complex assembly"/>
    <property type="evidence" value="ECO:0000266"/>
    <property type="project" value="PomBase"/>
</dbReference>
<organism>
    <name type="scientific">Schizosaccharomyces pombe (strain 972 / ATCC 24843)</name>
    <name type="common">Fission yeast</name>
    <dbReference type="NCBI Taxonomy" id="284812"/>
    <lineage>
        <taxon>Eukaryota</taxon>
        <taxon>Fungi</taxon>
        <taxon>Dikarya</taxon>
        <taxon>Ascomycota</taxon>
        <taxon>Taphrinomycotina</taxon>
        <taxon>Schizosaccharomycetes</taxon>
        <taxon>Schizosaccharomycetales</taxon>
        <taxon>Schizosaccharomycetaceae</taxon>
        <taxon>Schizosaccharomyces</taxon>
    </lineage>
</organism>
<sequence>MLRKLPINFAKWTVKKVPVQQKRFNSQQKEISPHIMFYKNYARPLGKVTLFALATYYGLEIVWWKLDASEQEAIKNSKLLICESSFSLLTFRRITEFRECEIKTRDLYDPEI</sequence>
<gene>
    <name evidence="1" type="primary">ina17</name>
    <name evidence="4" type="ORF">SPBC3B8.10</name>
</gene>
<name>INA17_SCHPO</name>
<keyword id="KW-0143">Chaperone</keyword>
<keyword id="KW-0472">Membrane</keyword>
<keyword id="KW-0496">Mitochondrion</keyword>
<keyword id="KW-0999">Mitochondrion inner membrane</keyword>
<keyword id="KW-1185">Reference proteome</keyword>
<keyword id="KW-0809">Transit peptide</keyword>
<keyword id="KW-0812">Transmembrane</keyword>
<keyword id="KW-1133">Transmembrane helix</keyword>
<comment type="function">
    <text evidence="1">Component of the INA complex (INAC) that promotes the biogenesis of mitochondrial F(1)F(0)-ATP synthase. INAC facilitates the assembly of the peripheral stalk and promotes the assembly of the catalytic F(1)-domain with the membrane-embedded F(0)-domain.</text>
</comment>
<comment type="subunit">
    <text evidence="1">Component of the inner membrane assembly (INA) complex. Interacts with a subset of F(1)F(0)-ATP synthase subunits of the F(1)-domain and the peripheral stalk.</text>
</comment>
<comment type="subcellular location">
    <subcellularLocation>
        <location evidence="1">Mitochondrion inner membrane</location>
        <topology evidence="2">Single-pass membrane protein</topology>
    </subcellularLocation>
</comment>
<comment type="similarity">
    <text evidence="3">Belongs to the INA17 family.</text>
</comment>
<protein>
    <recommendedName>
        <fullName evidence="1">Inner membrane assembly complex subunit 17</fullName>
    </recommendedName>
</protein>
<accession>P0CU26</accession>